<name>LPXD_BORA1</name>
<protein>
    <recommendedName>
        <fullName evidence="1">UDP-3-O-acylglucosamine N-acyltransferase</fullName>
        <ecNumber evidence="1">2.3.1.191</ecNumber>
    </recommendedName>
</protein>
<feature type="chain" id="PRO_0000264349" description="UDP-3-O-acylglucosamine N-acyltransferase">
    <location>
        <begin position="1"/>
        <end position="361"/>
    </location>
</feature>
<feature type="active site" description="Proton acceptor" evidence="1">
    <location>
        <position position="264"/>
    </location>
</feature>
<keyword id="KW-0012">Acyltransferase</keyword>
<keyword id="KW-0441">Lipid A biosynthesis</keyword>
<keyword id="KW-0444">Lipid biosynthesis</keyword>
<keyword id="KW-0443">Lipid metabolism</keyword>
<keyword id="KW-1185">Reference proteome</keyword>
<keyword id="KW-0677">Repeat</keyword>
<keyword id="KW-0808">Transferase</keyword>
<proteinExistence type="inferred from homology"/>
<dbReference type="EC" id="2.3.1.191" evidence="1"/>
<dbReference type="EMBL" id="AM167904">
    <property type="protein sequence ID" value="CAJ49352.1"/>
    <property type="molecule type" value="Genomic_DNA"/>
</dbReference>
<dbReference type="RefSeq" id="WP_012417413.1">
    <property type="nucleotide sequence ID" value="NC_010645.1"/>
</dbReference>
<dbReference type="SMR" id="Q2L151"/>
<dbReference type="STRING" id="360910.BAV1744"/>
<dbReference type="GeneID" id="92935195"/>
<dbReference type="KEGG" id="bav:BAV1744"/>
<dbReference type="eggNOG" id="COG1044">
    <property type="taxonomic scope" value="Bacteria"/>
</dbReference>
<dbReference type="HOGENOM" id="CLU_049865_0_1_4"/>
<dbReference type="OrthoDB" id="9784739at2"/>
<dbReference type="UniPathway" id="UPA00973"/>
<dbReference type="Proteomes" id="UP000001977">
    <property type="component" value="Chromosome"/>
</dbReference>
<dbReference type="GO" id="GO:0016020">
    <property type="term" value="C:membrane"/>
    <property type="evidence" value="ECO:0007669"/>
    <property type="project" value="GOC"/>
</dbReference>
<dbReference type="GO" id="GO:0016410">
    <property type="term" value="F:N-acyltransferase activity"/>
    <property type="evidence" value="ECO:0007669"/>
    <property type="project" value="InterPro"/>
</dbReference>
<dbReference type="GO" id="GO:0009245">
    <property type="term" value="P:lipid A biosynthetic process"/>
    <property type="evidence" value="ECO:0007669"/>
    <property type="project" value="UniProtKB-UniRule"/>
</dbReference>
<dbReference type="CDD" id="cd03352">
    <property type="entry name" value="LbH_LpxD"/>
    <property type="match status" value="1"/>
</dbReference>
<dbReference type="Gene3D" id="2.160.10.10">
    <property type="entry name" value="Hexapeptide repeat proteins"/>
    <property type="match status" value="1"/>
</dbReference>
<dbReference type="Gene3D" id="3.40.1390.10">
    <property type="entry name" value="MurE/MurF, N-terminal domain"/>
    <property type="match status" value="1"/>
</dbReference>
<dbReference type="HAMAP" id="MF_00523">
    <property type="entry name" value="LpxD"/>
    <property type="match status" value="1"/>
</dbReference>
<dbReference type="InterPro" id="IPR001451">
    <property type="entry name" value="Hexapep"/>
</dbReference>
<dbReference type="InterPro" id="IPR018357">
    <property type="entry name" value="Hexapep_transf_CS"/>
</dbReference>
<dbReference type="InterPro" id="IPR007691">
    <property type="entry name" value="LpxD"/>
</dbReference>
<dbReference type="InterPro" id="IPR011004">
    <property type="entry name" value="Trimer_LpxA-like_sf"/>
</dbReference>
<dbReference type="InterPro" id="IPR020573">
    <property type="entry name" value="UDP_GlcNAc_AcTrfase_non-rep"/>
</dbReference>
<dbReference type="NCBIfam" id="TIGR01853">
    <property type="entry name" value="lipid_A_lpxD"/>
    <property type="match status" value="1"/>
</dbReference>
<dbReference type="NCBIfam" id="NF002060">
    <property type="entry name" value="PRK00892.1"/>
    <property type="match status" value="1"/>
</dbReference>
<dbReference type="PANTHER" id="PTHR43378">
    <property type="entry name" value="UDP-3-O-ACYLGLUCOSAMINE N-ACYLTRANSFERASE"/>
    <property type="match status" value="1"/>
</dbReference>
<dbReference type="PANTHER" id="PTHR43378:SF2">
    <property type="entry name" value="UDP-3-O-ACYLGLUCOSAMINE N-ACYLTRANSFERASE 1, MITOCHONDRIAL-RELATED"/>
    <property type="match status" value="1"/>
</dbReference>
<dbReference type="Pfam" id="PF00132">
    <property type="entry name" value="Hexapep"/>
    <property type="match status" value="1"/>
</dbReference>
<dbReference type="Pfam" id="PF04613">
    <property type="entry name" value="LpxD"/>
    <property type="match status" value="1"/>
</dbReference>
<dbReference type="SUPFAM" id="SSF51161">
    <property type="entry name" value="Trimeric LpxA-like enzymes"/>
    <property type="match status" value="1"/>
</dbReference>
<dbReference type="PROSITE" id="PS00101">
    <property type="entry name" value="HEXAPEP_TRANSFERASES"/>
    <property type="match status" value="2"/>
</dbReference>
<comment type="function">
    <text evidence="1">Catalyzes the N-acylation of UDP-3-O-acylglucosamine using 3-hydroxyacyl-ACP as the acyl donor. Is involved in the biosynthesis of lipid A, a phosphorylated glycolipid that anchors the lipopolysaccharide to the outer membrane of the cell.</text>
</comment>
<comment type="catalytic activity">
    <reaction evidence="1">
        <text>a UDP-3-O-[(3R)-3-hydroxyacyl]-alpha-D-glucosamine + a (3R)-hydroxyacyl-[ACP] = a UDP-2-N,3-O-bis[(3R)-3-hydroxyacyl]-alpha-D-glucosamine + holo-[ACP] + H(+)</text>
        <dbReference type="Rhea" id="RHEA:53836"/>
        <dbReference type="Rhea" id="RHEA-COMP:9685"/>
        <dbReference type="Rhea" id="RHEA-COMP:9945"/>
        <dbReference type="ChEBI" id="CHEBI:15378"/>
        <dbReference type="ChEBI" id="CHEBI:64479"/>
        <dbReference type="ChEBI" id="CHEBI:78827"/>
        <dbReference type="ChEBI" id="CHEBI:137740"/>
        <dbReference type="ChEBI" id="CHEBI:137748"/>
        <dbReference type="EC" id="2.3.1.191"/>
    </reaction>
</comment>
<comment type="pathway">
    <text evidence="1">Bacterial outer membrane biogenesis; LPS lipid A biosynthesis.</text>
</comment>
<comment type="subunit">
    <text evidence="1">Homotrimer.</text>
</comment>
<comment type="similarity">
    <text evidence="1">Belongs to the transferase hexapeptide repeat family. LpxD subfamily.</text>
</comment>
<gene>
    <name evidence="1" type="primary">lpxD</name>
    <name type="ordered locus">BAV1744</name>
</gene>
<organism>
    <name type="scientific">Bordetella avium (strain 197N)</name>
    <dbReference type="NCBI Taxonomy" id="360910"/>
    <lineage>
        <taxon>Bacteria</taxon>
        <taxon>Pseudomonadati</taxon>
        <taxon>Pseudomonadota</taxon>
        <taxon>Betaproteobacteria</taxon>
        <taxon>Burkholderiales</taxon>
        <taxon>Alcaligenaceae</taxon>
        <taxon>Bordetella</taxon>
    </lineage>
</organism>
<sequence>MPVLLDSSRAPRLDALLSKGNTQGLECQIDSPTGDLPLIAGIGTLASAGAQEIAFLSNPRYQSQVASTAAAAVIVTLDVAQALRAQGSTLVFVVCRHPYLLYARLAQWFDAERRGLPPAGVHPSAVVAPDAVIEEGASVGPQCVVDSGARIGRGASLGPGCIVGQGSTVGANSRLHARVTLYDGVHVGARAIIHSGAVLGADGFGFAPDPTLGKGAWGKIPQLGGVTVGNDVEIGANTTIDRGAIENTIIGDGVKLDNLIMIAHNVRIGAHTAVAACVGIAGSTVIGERCIVGGAAMFSGHLSICDDVTISGGTPVTSSITKPGRYTGVYPYSEHGEWQRNAAVIQQLALLRRRVRALEKA</sequence>
<reference key="1">
    <citation type="journal article" date="2006" name="J. Bacteriol.">
        <title>Comparison of the genome sequence of the poultry pathogen Bordetella avium with those of B. bronchiseptica, B. pertussis, and B. parapertussis reveals extensive diversity in surface structures associated with host interaction.</title>
        <authorList>
            <person name="Sebaihia M."/>
            <person name="Preston A."/>
            <person name="Maskell D.J."/>
            <person name="Kuzmiak H."/>
            <person name="Connell T.D."/>
            <person name="King N.D."/>
            <person name="Orndorff P.E."/>
            <person name="Miyamoto D.M."/>
            <person name="Thomson N.R."/>
            <person name="Harris D."/>
            <person name="Goble A."/>
            <person name="Lord A."/>
            <person name="Murphy L."/>
            <person name="Quail M.A."/>
            <person name="Rutter S."/>
            <person name="Squares R."/>
            <person name="Squares S."/>
            <person name="Woodward J."/>
            <person name="Parkhill J."/>
            <person name="Temple L.M."/>
        </authorList>
    </citation>
    <scope>NUCLEOTIDE SEQUENCE [LARGE SCALE GENOMIC DNA]</scope>
    <source>
        <strain>197N</strain>
    </source>
</reference>
<evidence type="ECO:0000255" key="1">
    <source>
        <dbReference type="HAMAP-Rule" id="MF_00523"/>
    </source>
</evidence>
<accession>Q2L151</accession>